<geneLocation type="mitochondrion"/>
<organism>
    <name type="scientific">Bos mutus grunniens</name>
    <name type="common">Wild yak</name>
    <name type="synonym">Bos grunniens</name>
    <dbReference type="NCBI Taxonomy" id="30521"/>
    <lineage>
        <taxon>Eukaryota</taxon>
        <taxon>Metazoa</taxon>
        <taxon>Chordata</taxon>
        <taxon>Craniata</taxon>
        <taxon>Vertebrata</taxon>
        <taxon>Euteleostomi</taxon>
        <taxon>Mammalia</taxon>
        <taxon>Eutheria</taxon>
        <taxon>Laurasiatheria</taxon>
        <taxon>Artiodactyla</taxon>
        <taxon>Ruminantia</taxon>
        <taxon>Pecora</taxon>
        <taxon>Bovidae</taxon>
        <taxon>Bovinae</taxon>
        <taxon>Bos</taxon>
    </lineage>
</organism>
<accession>Q5Y4R0</accession>
<sequence length="318" mass="35652">MFMINILMLIIPILLAGAFLTLVERKVLGYMQLRKGPNVVGPYGLLQPIADAIKLFIKEPLRPATSSTSMFILAPILALGLALTMWIPLPMPHPLINMNLGVLFMLAMSSLAVYSILWSGWASNSKYALIGALRAVAQTISYEVTLAIILLSVLLMSGSFTLSTLIITQEQTWLILPAWPLAMMWFISTLAETNRAPFDLTEGESELVSGFNVEYAAGPFALFFMAEYANIIMMNMFTAILFLGTSHNPHMPELYTINFIIKSLLLTMLFLWIRASYPRFRYDQLMHLLWKNFLPLTLALCMWHVSLPILTSGIPPQT</sequence>
<protein>
    <recommendedName>
        <fullName>NADH-ubiquinone oxidoreductase chain 1</fullName>
        <ecNumber evidence="1">7.1.1.2</ecNumber>
    </recommendedName>
    <alternativeName>
        <fullName>NADH dehydrogenase subunit 1</fullName>
    </alternativeName>
</protein>
<name>NU1M_BOSMU</name>
<reference key="1">
    <citation type="submission" date="2004-10" db="EMBL/GenBank/DDBJ databases">
        <title>Complete sequence of the Yak (Bos grunniens.) mitochondrial genome and its genetic relationship with related species.</title>
        <authorList>
            <person name="Gu Z."/>
            <person name="Zhao X."/>
            <person name="Li N."/>
            <person name="Wu C."/>
        </authorList>
    </citation>
    <scope>NUCLEOTIDE SEQUENCE [GENOMIC DNA]</scope>
</reference>
<feature type="chain" id="PRO_0000253515" description="NADH-ubiquinone oxidoreductase chain 1">
    <location>
        <begin position="1"/>
        <end position="318"/>
    </location>
</feature>
<feature type="transmembrane region" description="Helical" evidence="3">
    <location>
        <begin position="2"/>
        <end position="22"/>
    </location>
</feature>
<feature type="transmembrane region" description="Helical" evidence="3">
    <location>
        <begin position="70"/>
        <end position="90"/>
    </location>
</feature>
<feature type="transmembrane region" description="Helical" evidence="3">
    <location>
        <begin position="100"/>
        <end position="120"/>
    </location>
</feature>
<feature type="transmembrane region" description="Helical" evidence="3">
    <location>
        <begin position="147"/>
        <end position="167"/>
    </location>
</feature>
<feature type="transmembrane region" description="Helical" evidence="3">
    <location>
        <begin position="172"/>
        <end position="192"/>
    </location>
</feature>
<feature type="transmembrane region" description="Helical" evidence="3">
    <location>
        <begin position="222"/>
        <end position="242"/>
    </location>
</feature>
<feature type="transmembrane region" description="Helical" evidence="3">
    <location>
        <begin position="253"/>
        <end position="273"/>
    </location>
</feature>
<feature type="transmembrane region" description="Helical" evidence="3">
    <location>
        <begin position="294"/>
        <end position="314"/>
    </location>
</feature>
<proteinExistence type="inferred from homology"/>
<dbReference type="EC" id="7.1.1.2" evidence="1"/>
<dbReference type="EMBL" id="AY684273">
    <property type="protein sequence ID" value="AAU89106.1"/>
    <property type="molecule type" value="Genomic_DNA"/>
</dbReference>
<dbReference type="SMR" id="Q5Y4R0"/>
<dbReference type="Proteomes" id="UP000694520">
    <property type="component" value="Unplaced"/>
</dbReference>
<dbReference type="GO" id="GO:0005743">
    <property type="term" value="C:mitochondrial inner membrane"/>
    <property type="evidence" value="ECO:0000250"/>
    <property type="project" value="UniProtKB"/>
</dbReference>
<dbReference type="GO" id="GO:0008137">
    <property type="term" value="F:NADH dehydrogenase (ubiquinone) activity"/>
    <property type="evidence" value="ECO:0000250"/>
    <property type="project" value="UniProtKB"/>
</dbReference>
<dbReference type="GO" id="GO:0006120">
    <property type="term" value="P:mitochondrial electron transport, NADH to ubiquinone"/>
    <property type="evidence" value="ECO:0000250"/>
    <property type="project" value="UniProtKB"/>
</dbReference>
<dbReference type="GO" id="GO:0032981">
    <property type="term" value="P:mitochondrial respiratory chain complex I assembly"/>
    <property type="evidence" value="ECO:0000250"/>
    <property type="project" value="UniProtKB"/>
</dbReference>
<dbReference type="HAMAP" id="MF_01350">
    <property type="entry name" value="NDH1_NuoH"/>
    <property type="match status" value="1"/>
</dbReference>
<dbReference type="InterPro" id="IPR001694">
    <property type="entry name" value="NADH_UbQ_OxRdtase_su1/FPO"/>
</dbReference>
<dbReference type="InterPro" id="IPR018086">
    <property type="entry name" value="NADH_UbQ_OxRdtase_su1_CS"/>
</dbReference>
<dbReference type="PANTHER" id="PTHR11432">
    <property type="entry name" value="NADH DEHYDROGENASE SUBUNIT 1"/>
    <property type="match status" value="1"/>
</dbReference>
<dbReference type="PANTHER" id="PTHR11432:SF3">
    <property type="entry name" value="NADH-UBIQUINONE OXIDOREDUCTASE CHAIN 1"/>
    <property type="match status" value="1"/>
</dbReference>
<dbReference type="Pfam" id="PF00146">
    <property type="entry name" value="NADHdh"/>
    <property type="match status" value="1"/>
</dbReference>
<dbReference type="PROSITE" id="PS00667">
    <property type="entry name" value="COMPLEX1_ND1_1"/>
    <property type="match status" value="1"/>
</dbReference>
<dbReference type="PROSITE" id="PS00668">
    <property type="entry name" value="COMPLEX1_ND1_2"/>
    <property type="match status" value="1"/>
</dbReference>
<gene>
    <name type="primary">MT-ND1</name>
    <name type="synonym">MTND1</name>
    <name type="synonym">NADH1</name>
    <name type="synonym">ND1</name>
</gene>
<keyword id="KW-0249">Electron transport</keyword>
<keyword id="KW-0472">Membrane</keyword>
<keyword id="KW-0496">Mitochondrion</keyword>
<keyword id="KW-0999">Mitochondrion inner membrane</keyword>
<keyword id="KW-0520">NAD</keyword>
<keyword id="KW-1185">Reference proteome</keyword>
<keyword id="KW-0679">Respiratory chain</keyword>
<keyword id="KW-1278">Translocase</keyword>
<keyword id="KW-0812">Transmembrane</keyword>
<keyword id="KW-1133">Transmembrane helix</keyword>
<keyword id="KW-0813">Transport</keyword>
<keyword id="KW-0830">Ubiquinone</keyword>
<comment type="function">
    <text evidence="1">Core subunit of the mitochondrial membrane respiratory chain NADH dehydrogenase (Complex I) which catalyzes electron transfer from NADH through the respiratory chain, using ubiquinone as an electron acceptor. Essential for the catalytic activity and assembly of complex I.</text>
</comment>
<comment type="catalytic activity">
    <reaction evidence="1">
        <text>a ubiquinone + NADH + 5 H(+)(in) = a ubiquinol + NAD(+) + 4 H(+)(out)</text>
        <dbReference type="Rhea" id="RHEA:29091"/>
        <dbReference type="Rhea" id="RHEA-COMP:9565"/>
        <dbReference type="Rhea" id="RHEA-COMP:9566"/>
        <dbReference type="ChEBI" id="CHEBI:15378"/>
        <dbReference type="ChEBI" id="CHEBI:16389"/>
        <dbReference type="ChEBI" id="CHEBI:17976"/>
        <dbReference type="ChEBI" id="CHEBI:57540"/>
        <dbReference type="ChEBI" id="CHEBI:57945"/>
        <dbReference type="EC" id="7.1.1.2"/>
    </reaction>
</comment>
<comment type="subunit">
    <text evidence="2">Core subunit of respiratory chain NADH dehydrogenase (Complex I) which is composed of 45 different subunits.</text>
</comment>
<comment type="subcellular location">
    <subcellularLocation>
        <location evidence="2">Mitochondrion inner membrane</location>
        <topology evidence="3">Multi-pass membrane protein</topology>
    </subcellularLocation>
</comment>
<comment type="similarity">
    <text evidence="4">Belongs to the complex I subunit 1 family.</text>
</comment>
<evidence type="ECO:0000250" key="1">
    <source>
        <dbReference type="UniProtKB" id="P03886"/>
    </source>
</evidence>
<evidence type="ECO:0000250" key="2">
    <source>
        <dbReference type="UniProtKB" id="P03887"/>
    </source>
</evidence>
<evidence type="ECO:0000255" key="3"/>
<evidence type="ECO:0000305" key="4"/>